<name>ASQH1_EMENI</name>
<protein>
    <recommendedName>
        <fullName evidence="6">Prenyltransferase asqH1</fullName>
        <ecNumber evidence="6">2.5.1.-</ecNumber>
    </recommendedName>
    <alternativeName>
        <fullName evidence="6">4'-methoxyviridicatin/aspoquinolone biosynthesis cluster protein asqH1</fullName>
    </alternativeName>
    <alternativeName>
        <fullName evidence="6">Aspoquinolone biosynthesis protein H1</fullName>
    </alternativeName>
</protein>
<dbReference type="EC" id="2.5.1.-" evidence="6"/>
<dbReference type="EMBL" id="AACD01000170">
    <property type="protein sequence ID" value="EAA61520.1"/>
    <property type="status" value="ALT_SEQ"/>
    <property type="molecule type" value="Genomic_DNA"/>
</dbReference>
<dbReference type="EMBL" id="BN001306">
    <property type="protein sequence ID" value="CBF82275.1"/>
    <property type="molecule type" value="Genomic_DNA"/>
</dbReference>
<dbReference type="RefSeq" id="XP_682498.1">
    <property type="nucleotide sequence ID" value="XM_677406.1"/>
</dbReference>
<dbReference type="SMR" id="C8VJQ1"/>
<dbReference type="EnsemblFungi" id="CBF82275">
    <property type="protein sequence ID" value="CBF82275"/>
    <property type="gene ID" value="ANIA_11194"/>
</dbReference>
<dbReference type="GeneID" id="2868058"/>
<dbReference type="KEGG" id="ani:ANIA_11194"/>
<dbReference type="VEuPathDB" id="FungiDB:AN11194"/>
<dbReference type="eggNOG" id="ENOG502S2XP">
    <property type="taxonomic scope" value="Eukaryota"/>
</dbReference>
<dbReference type="HOGENOM" id="CLU_037431_2_0_1"/>
<dbReference type="InParanoid" id="C8VJQ1"/>
<dbReference type="OMA" id="AIMELWE"/>
<dbReference type="OrthoDB" id="3354387at2759"/>
<dbReference type="BioCyc" id="MetaCyc:MONOMER-124177"/>
<dbReference type="Proteomes" id="UP000000560">
    <property type="component" value="Chromosome VI"/>
</dbReference>
<dbReference type="GO" id="GO:0004659">
    <property type="term" value="F:prenyltransferase activity"/>
    <property type="evidence" value="ECO:0000318"/>
    <property type="project" value="GO_Central"/>
</dbReference>
<dbReference type="GO" id="GO:0009820">
    <property type="term" value="P:alkaloid metabolic process"/>
    <property type="evidence" value="ECO:0007669"/>
    <property type="project" value="InterPro"/>
</dbReference>
<dbReference type="CDD" id="cd13929">
    <property type="entry name" value="PT-DMATS_CymD"/>
    <property type="match status" value="1"/>
</dbReference>
<dbReference type="InterPro" id="IPR017795">
    <property type="entry name" value="Aro_prenylTrfase_DMATS"/>
</dbReference>
<dbReference type="InterPro" id="IPR012148">
    <property type="entry name" value="DMATS-type_fun"/>
</dbReference>
<dbReference type="NCBIfam" id="TIGR03429">
    <property type="entry name" value="arom_pren_DMATS"/>
    <property type="match status" value="1"/>
</dbReference>
<dbReference type="PANTHER" id="PTHR40627">
    <property type="entry name" value="INDOLE PRENYLTRANSFERASE TDIB-RELATED"/>
    <property type="match status" value="1"/>
</dbReference>
<dbReference type="PANTHER" id="PTHR40627:SF4">
    <property type="entry name" value="PRENYLTRANSFERASE ASQH1-RELATED"/>
    <property type="match status" value="1"/>
</dbReference>
<dbReference type="Pfam" id="PF11991">
    <property type="entry name" value="Trp_DMAT"/>
    <property type="match status" value="1"/>
</dbReference>
<dbReference type="PIRSF" id="PIRSF000509">
    <property type="entry name" value="Trp_DMAT"/>
    <property type="match status" value="1"/>
</dbReference>
<accession>C8VJQ1</accession>
<accession>Q5AR51</accession>
<sequence>MLCKTGGCVEGRAAEDQSTRKVHWGQEGSGQSPEARPRALDMISRLEPSRGPSHAHWWHIISPQLAVMLEETGYPVEKQLEILTFLYHWVIPYLAPVAAGNAASSCNWKSLLPSAIVPLEYSWKWDSSGKAREPEIRLTIEVFGELSGTQFDPLNQAPAMELLYRLSSILPGVNQILASHFRCKFFDHDNVKYMEEPRLDTLPRSTMLTYMTPRKLGQQGFAPLSEYVSAIQALGQASGRTLDTLTNFLSTSPEGVHLHPFGLAFDNVEPSSSRLKLYFFSNRTSYNSMREVLTLGGRIYSESYDMEEKLRTIYSLAQLLMGCPENNAEDADIPLLPITHSQHTAAERATLLSGFQYYFDVAPGADLPSVKFYIPVRKEHANDRAVGSALTGWFREQGRGKFCDNYMRMLERLAGGLELGECRGLHSFISCMIGGDGEIEVTSYLLPGSEA</sequence>
<comment type="function">
    <text evidence="1 4 5">Prenyltransferase; part of the gene cluster that mediates the biosynthesis of the aspoquinolone mycotoxins (PubMed:25251934). Within the pathway, the prenyltransferase asqH1 catalyzes the canonical Friedel-Crafts alkylation of quinolinone B with dimethylallyl cation to yield dimethylallyl quinolone (By similarity). The first step of the pathway is catalyzed by the nonribosomal peptide synthetase asqK that condenses anthranilic acid and O-methyl-L-tyrosine to produce 4'-methoxycyclopeptin. 4'-methoxycyclopeptin is then converted to 4'-methoxydehydrocyclopeptin by the ketoglutarate-dependent dioxygenase asqJ. AsqJ also converts its first product 4'-methoxydehydrocyclopeptin to 4'-methoxycyclopenin. The following conversion of 4'-methoxycyclopenin into 4'-methoxyviridicatin is catalyzed by the cyclopenase asqI. 4'-methoxyviridicatin is the precursor of quinolone natural products, and is further converted to quinolinone B. The prenyltransferase asqH1 then catalyzes the canonical Friedel-Crafts alkylation of quinolinone B with dimethylallyl cation to yield dimethylallyl quinolone, which is subjected to FAD-dependent dehydrogenation by the FAD-linked oxidoreductase asqF to yield conjugated aryl diene. The delta(3') double bond then serves as the site of the second alkylation with DMAPP catalyzed by the prenyltransferase asqH2 to yield a carbenium ion intermediate, which can be attacked by H(2)O to yield a styrenyl quinolone containing a C3'-hydroxyprenyl chain. The FAD-dependent monooxygenase asqG performs epoxidation of the terminal C7'-C8' olefin. Finally, after dehydratation of the epoxide at C3 by asqC, the quinolone epoxide rearrangement protein asqO catalyzes an enzymatic 3-exo-tet cyclization to yield the cyclopropyl-THF ring system in aspoquinolone (Probable).</text>
</comment>
<comment type="catalytic activity">
    <reaction evidence="1">
        <text>quinolinone B + dimethylallyl diphosphate = peniprequinolone + diphosphate</text>
        <dbReference type="Rhea" id="RHEA:73999"/>
        <dbReference type="ChEBI" id="CHEBI:33019"/>
        <dbReference type="ChEBI" id="CHEBI:57623"/>
        <dbReference type="ChEBI" id="CHEBI:181572"/>
        <dbReference type="ChEBI" id="CHEBI:182576"/>
    </reaction>
    <physiologicalReaction direction="left-to-right" evidence="1">
        <dbReference type="Rhea" id="RHEA:74000"/>
    </physiologicalReaction>
</comment>
<comment type="pathway">
    <text evidence="6">Secondary metabolite biosynthesis.</text>
</comment>
<comment type="pathway">
    <text evidence="6">Alkaloid biosynthesis.</text>
</comment>
<comment type="pathway">
    <text evidence="6">Mycotoxin biosynthesis.</text>
</comment>
<comment type="similarity">
    <text evidence="5">Belongs to the tryptophan dimethylallyltransferase family.</text>
</comment>
<comment type="sequence caution" evidence="5">
    <conflict type="erroneous gene model prediction">
        <sequence resource="EMBL-CDS" id="EAA61520"/>
    </conflict>
    <text>The predicted gene AN9229 has been split into 2 genes: ANIA_11194 and ANIA_1120.</text>
</comment>
<reference key="1">
    <citation type="journal article" date="2005" name="Nature">
        <title>Sequencing of Aspergillus nidulans and comparative analysis with A. fumigatus and A. oryzae.</title>
        <authorList>
            <person name="Galagan J.E."/>
            <person name="Calvo S.E."/>
            <person name="Cuomo C."/>
            <person name="Ma L.-J."/>
            <person name="Wortman J.R."/>
            <person name="Batzoglou S."/>
            <person name="Lee S.-I."/>
            <person name="Bastuerkmen M."/>
            <person name="Spevak C.C."/>
            <person name="Clutterbuck J."/>
            <person name="Kapitonov V."/>
            <person name="Jurka J."/>
            <person name="Scazzocchio C."/>
            <person name="Farman M.L."/>
            <person name="Butler J."/>
            <person name="Purcell S."/>
            <person name="Harris S."/>
            <person name="Braus G.H."/>
            <person name="Draht O."/>
            <person name="Busch S."/>
            <person name="D'Enfert C."/>
            <person name="Bouchier C."/>
            <person name="Goldman G.H."/>
            <person name="Bell-Pedersen D."/>
            <person name="Griffiths-Jones S."/>
            <person name="Doonan J.H."/>
            <person name="Yu J."/>
            <person name="Vienken K."/>
            <person name="Pain A."/>
            <person name="Freitag M."/>
            <person name="Selker E.U."/>
            <person name="Archer D.B."/>
            <person name="Penalva M.A."/>
            <person name="Oakley B.R."/>
            <person name="Momany M."/>
            <person name="Tanaka T."/>
            <person name="Kumagai T."/>
            <person name="Asai K."/>
            <person name="Machida M."/>
            <person name="Nierman W.C."/>
            <person name="Denning D.W."/>
            <person name="Caddick M.X."/>
            <person name="Hynes M."/>
            <person name="Paoletti M."/>
            <person name="Fischer R."/>
            <person name="Miller B.L."/>
            <person name="Dyer P.S."/>
            <person name="Sachs M.S."/>
            <person name="Osmani S.A."/>
            <person name="Birren B.W."/>
        </authorList>
    </citation>
    <scope>NUCLEOTIDE SEQUENCE [LARGE SCALE GENOMIC DNA]</scope>
    <source>
        <strain>FGSC A4 / ATCC 38163 / CBS 112.46 / NRRL 194 / M139</strain>
    </source>
</reference>
<reference key="2">
    <citation type="journal article" date="2009" name="Fungal Genet. Biol.">
        <title>The 2008 update of the Aspergillus nidulans genome annotation: a community effort.</title>
        <authorList>
            <person name="Wortman J.R."/>
            <person name="Gilsenan J.M."/>
            <person name="Joardar V."/>
            <person name="Deegan J."/>
            <person name="Clutterbuck J."/>
            <person name="Andersen M.R."/>
            <person name="Archer D."/>
            <person name="Bencina M."/>
            <person name="Braus G."/>
            <person name="Coutinho P."/>
            <person name="von Dohren H."/>
            <person name="Doonan J."/>
            <person name="Driessen A.J."/>
            <person name="Durek P."/>
            <person name="Espeso E."/>
            <person name="Fekete E."/>
            <person name="Flipphi M."/>
            <person name="Estrada C.G."/>
            <person name="Geysens S."/>
            <person name="Goldman G."/>
            <person name="de Groot P.W."/>
            <person name="Hansen K."/>
            <person name="Harris S.D."/>
            <person name="Heinekamp T."/>
            <person name="Helmstaedt K."/>
            <person name="Henrissat B."/>
            <person name="Hofmann G."/>
            <person name="Homan T."/>
            <person name="Horio T."/>
            <person name="Horiuchi H."/>
            <person name="James S."/>
            <person name="Jones M."/>
            <person name="Karaffa L."/>
            <person name="Karanyi Z."/>
            <person name="Kato M."/>
            <person name="Keller N."/>
            <person name="Kelly D.E."/>
            <person name="Kiel J.A."/>
            <person name="Kim J.M."/>
            <person name="van der Klei I.J."/>
            <person name="Klis F.M."/>
            <person name="Kovalchuk A."/>
            <person name="Krasevec N."/>
            <person name="Kubicek C.P."/>
            <person name="Liu B."/>
            <person name="Maccabe A."/>
            <person name="Meyer V."/>
            <person name="Mirabito P."/>
            <person name="Miskei M."/>
            <person name="Mos M."/>
            <person name="Mullins J."/>
            <person name="Nelson D.R."/>
            <person name="Nielsen J."/>
            <person name="Oakley B.R."/>
            <person name="Osmani S.A."/>
            <person name="Pakula T."/>
            <person name="Paszewski A."/>
            <person name="Paulsen I."/>
            <person name="Pilsyk S."/>
            <person name="Pocsi I."/>
            <person name="Punt P.J."/>
            <person name="Ram A.F."/>
            <person name="Ren Q."/>
            <person name="Robellet X."/>
            <person name="Robson G."/>
            <person name="Seiboth B."/>
            <person name="van Solingen P."/>
            <person name="Specht T."/>
            <person name="Sun J."/>
            <person name="Taheri-Talesh N."/>
            <person name="Takeshita N."/>
            <person name="Ussery D."/>
            <person name="vanKuyk P.A."/>
            <person name="Visser H."/>
            <person name="van de Vondervoort P.J."/>
            <person name="de Vries R.P."/>
            <person name="Walton J."/>
            <person name="Xiang X."/>
            <person name="Xiong Y."/>
            <person name="Zeng A.P."/>
            <person name="Brandt B.W."/>
            <person name="Cornell M.J."/>
            <person name="van den Hondel C.A."/>
            <person name="Visser J."/>
            <person name="Oliver S.G."/>
            <person name="Turner G."/>
        </authorList>
    </citation>
    <scope>GENOME REANNOTATION</scope>
    <source>
        <strain>FGSC A4 / ATCC 38163 / CBS 112.46 / NRRL 194 / M139</strain>
    </source>
</reference>
<reference key="3">
    <citation type="journal article" date="2014" name="Angew. Chem. Int. Ed.">
        <title>Non-heme dioxygenase catalyzes atypical oxidations of 6,7-bicyclic systems to form the 6,6-quinolone core of viridicatin-type fungal alkaloids.</title>
        <authorList>
            <person name="Ishikawa N."/>
            <person name="Tanaka H."/>
            <person name="Koyama F."/>
            <person name="Noguchi H."/>
            <person name="Wang C.C."/>
            <person name="Hotta K."/>
            <person name="Watanabe K."/>
        </authorList>
    </citation>
    <scope>FUNCTION</scope>
    <scope>PATHWAY</scope>
</reference>
<feature type="chain" id="PRO_0000437621" description="Prenyltransferase asqH1">
    <location>
        <begin position="1"/>
        <end position="451"/>
    </location>
</feature>
<feature type="region of interest" description="Disordered" evidence="3">
    <location>
        <begin position="14"/>
        <end position="37"/>
    </location>
</feature>
<feature type="binding site" evidence="2">
    <location>
        <position position="120"/>
    </location>
    <ligand>
        <name>L-tryptophan</name>
        <dbReference type="ChEBI" id="CHEBI:57912"/>
    </ligand>
</feature>
<feature type="binding site" evidence="2">
    <location>
        <position position="137"/>
    </location>
    <ligand>
        <name>substrate</name>
    </ligand>
</feature>
<feature type="binding site" evidence="2">
    <location>
        <position position="274"/>
    </location>
    <ligand>
        <name>substrate</name>
    </ligand>
</feature>
<feature type="binding site" evidence="2">
    <location>
        <position position="276"/>
    </location>
    <ligand>
        <name>substrate</name>
    </ligand>
</feature>
<feature type="binding site" evidence="2">
    <location>
        <position position="278"/>
    </location>
    <ligand>
        <name>substrate</name>
    </ligand>
</feature>
<feature type="binding site" evidence="2">
    <location>
        <position position="373"/>
    </location>
    <ligand>
        <name>substrate</name>
    </ligand>
</feature>
<proteinExistence type="inferred from homology"/>
<keyword id="KW-1185">Reference proteome</keyword>
<keyword id="KW-0808">Transferase</keyword>
<organism>
    <name type="scientific">Emericella nidulans (strain FGSC A4 / ATCC 38163 / CBS 112.46 / NRRL 194 / M139)</name>
    <name type="common">Aspergillus nidulans</name>
    <dbReference type="NCBI Taxonomy" id="227321"/>
    <lineage>
        <taxon>Eukaryota</taxon>
        <taxon>Fungi</taxon>
        <taxon>Dikarya</taxon>
        <taxon>Ascomycota</taxon>
        <taxon>Pezizomycotina</taxon>
        <taxon>Eurotiomycetes</taxon>
        <taxon>Eurotiomycetidae</taxon>
        <taxon>Eurotiales</taxon>
        <taxon>Aspergillaceae</taxon>
        <taxon>Aspergillus</taxon>
        <taxon>Aspergillus subgen. Nidulantes</taxon>
    </lineage>
</organism>
<gene>
    <name evidence="6" type="primary">asqH1</name>
    <name type="ORF">AN9229</name>
    <name type="ORF">ANIA_11194</name>
</gene>
<evidence type="ECO:0000250" key="1">
    <source>
        <dbReference type="UniProtKB" id="A0A1B2CTB7"/>
    </source>
</evidence>
<evidence type="ECO:0000250" key="2">
    <source>
        <dbReference type="UniProtKB" id="Q50EL0"/>
    </source>
</evidence>
<evidence type="ECO:0000256" key="3">
    <source>
        <dbReference type="SAM" id="MobiDB-lite"/>
    </source>
</evidence>
<evidence type="ECO:0000269" key="4">
    <source>
    </source>
</evidence>
<evidence type="ECO:0000305" key="5"/>
<evidence type="ECO:0000305" key="6">
    <source>
    </source>
</evidence>